<gene>
    <name type="primary">ACO1</name>
    <name type="synonym">IREB1</name>
</gene>
<accession>Q90875</accession>
<proteinExistence type="evidence at transcript level"/>
<sequence>MSNPFVQIVEPLDAKEPVKKFFNLSKLEDVRYARLPFSIRVLLEAAIRNCDEFLVKKQDVENILNWKVMQHKNVEVPFKPARVILQDFTGVPAVVDFAAMRDAVKKLGGDPEKINPICPADLVIDHSIQVDFNRRSDSLQKNQDLEFERNKERFEFLKWGSQAFKNMRIIPPGSGIIHQVNLEYLARVVMDQDGYYYPDSVVGTDSHTTMVDGLGVLGWGVGGIEAEAVMLGQPISMVLPEVVGYKLLGNPQPLVTSTDIVLTITKHLRQVGVVGKFVEFFGPGVAQLSIADRATIANMCPEYGATAAYFPVDDISIGYLVQTGRDKEKVLCTKKYLEAVGMLRDFKNSSQDPDFTQVVELDLHTVVPCCSGPKRPQDKVAVSDMKKDFETCLGAKQGFKGFQIAPDRHNSVIKFNFEGCDFELAHGSVVIAAITSCTNTSNPSVMLGAGLLAKKAVEAGLTVKPYIKTSLSPGSGVVTYYLRESGVMSYLSQLGFDVVGYGCMTCIGNSGPLPDSVVEAITQGDLVAVGVLSGNRNFEGRVHPNTRANYLASPPLVIAYAIAGTVRIDFEKEPLGISASGKKIFLKDIWPTRNEIQAVERQYVIPGMFKEVYQKIETVNEAWNALDAPSDKLYTWNPKSTYIKSPPFFDGLTLALQTPKTIEDAYVLLNFGDSVTTDHISPAGNIARNSPAARYLTSRGLTPREFNSYGSRRGNDAVMARGTFANIRLVNKFIDKQGPQTIHFPSGETLDVFDAAERYKQAGHPLIVLAGKEYGAGSSRDWAAKGPFLLGVKAVLAESYERIHRSNLVGMGVIPLQYLPGEDARTLGLTGRERYTIIIPENLKPQMNIQIKLDTGKTFHAIMRFDTDVELTYFHNGGILNYMIRKMAS</sequence>
<reference key="1">
    <citation type="journal article" date="1993" name="Chromosome Res.">
        <title>Identification and localization of two genes on the chicken Z chromosome: implication of evolutionary conservation of the Z chromosome among avian species.</title>
        <authorList>
            <person name="Saitoh Y."/>
            <person name="Ogawa A."/>
            <person name="Hori T."/>
            <person name="Kunita R."/>
            <person name="Mizuno S."/>
        </authorList>
    </citation>
    <scope>NUCLEOTIDE SEQUENCE [MRNA]</scope>
    <source>
        <tissue>Liver</tissue>
    </source>
</reference>
<name>ACOHC_CHICK</name>
<organism>
    <name type="scientific">Gallus gallus</name>
    <name type="common">Chicken</name>
    <dbReference type="NCBI Taxonomy" id="9031"/>
    <lineage>
        <taxon>Eukaryota</taxon>
        <taxon>Metazoa</taxon>
        <taxon>Chordata</taxon>
        <taxon>Craniata</taxon>
        <taxon>Vertebrata</taxon>
        <taxon>Euteleostomi</taxon>
        <taxon>Archelosauria</taxon>
        <taxon>Archosauria</taxon>
        <taxon>Dinosauria</taxon>
        <taxon>Saurischia</taxon>
        <taxon>Theropoda</taxon>
        <taxon>Coelurosauria</taxon>
        <taxon>Aves</taxon>
        <taxon>Neognathae</taxon>
        <taxon>Galloanserae</taxon>
        <taxon>Galliformes</taxon>
        <taxon>Phasianidae</taxon>
        <taxon>Phasianinae</taxon>
        <taxon>Gallus</taxon>
    </lineage>
</organism>
<dbReference type="EC" id="4.2.1.3" evidence="2"/>
<dbReference type="EMBL" id="D16150">
    <property type="protein sequence ID" value="BAA03715.1"/>
    <property type="molecule type" value="mRNA"/>
</dbReference>
<dbReference type="RefSeq" id="NP_001025707.1">
    <property type="nucleotide sequence ID" value="NM_001030536.1"/>
</dbReference>
<dbReference type="SMR" id="Q90875"/>
<dbReference type="FunCoup" id="Q90875">
    <property type="interactions" value="1937"/>
</dbReference>
<dbReference type="STRING" id="9031.ENSGALP00000055270"/>
<dbReference type="PaxDb" id="9031-ENSGALP00000003381"/>
<dbReference type="GeneID" id="373916"/>
<dbReference type="KEGG" id="gga:373916"/>
<dbReference type="CTD" id="48"/>
<dbReference type="VEuPathDB" id="HostDB:geneid_373916"/>
<dbReference type="eggNOG" id="KOG0452">
    <property type="taxonomic scope" value="Eukaryota"/>
</dbReference>
<dbReference type="InParanoid" id="Q90875"/>
<dbReference type="OrthoDB" id="2279155at2759"/>
<dbReference type="PhylomeDB" id="Q90875"/>
<dbReference type="PRO" id="PR:Q90875"/>
<dbReference type="Proteomes" id="UP000000539">
    <property type="component" value="Unassembled WGS sequence"/>
</dbReference>
<dbReference type="GO" id="GO:0005829">
    <property type="term" value="C:cytosol"/>
    <property type="evidence" value="ECO:0000250"/>
    <property type="project" value="UniProtKB"/>
</dbReference>
<dbReference type="GO" id="GO:0005739">
    <property type="term" value="C:mitochondrion"/>
    <property type="evidence" value="ECO:0000318"/>
    <property type="project" value="GO_Central"/>
</dbReference>
<dbReference type="GO" id="GO:0051538">
    <property type="term" value="F:3 iron, 4 sulfur cluster binding"/>
    <property type="evidence" value="ECO:0000318"/>
    <property type="project" value="GO_Central"/>
</dbReference>
<dbReference type="GO" id="GO:0051539">
    <property type="term" value="F:4 iron, 4 sulfur cluster binding"/>
    <property type="evidence" value="ECO:0000318"/>
    <property type="project" value="GO_Central"/>
</dbReference>
<dbReference type="GO" id="GO:0003994">
    <property type="term" value="F:aconitate hydratase activity"/>
    <property type="evidence" value="ECO:0000318"/>
    <property type="project" value="GO_Central"/>
</dbReference>
<dbReference type="GO" id="GO:0030350">
    <property type="term" value="F:iron-responsive element binding"/>
    <property type="evidence" value="ECO:0000318"/>
    <property type="project" value="GO_Central"/>
</dbReference>
<dbReference type="GO" id="GO:0046872">
    <property type="term" value="F:metal ion binding"/>
    <property type="evidence" value="ECO:0007669"/>
    <property type="project" value="UniProtKB-KW"/>
</dbReference>
<dbReference type="GO" id="GO:0006101">
    <property type="term" value="P:citrate metabolic process"/>
    <property type="evidence" value="ECO:0000318"/>
    <property type="project" value="GO_Central"/>
</dbReference>
<dbReference type="GO" id="GO:0006879">
    <property type="term" value="P:intracellular iron ion homeostasis"/>
    <property type="evidence" value="ECO:0000318"/>
    <property type="project" value="GO_Central"/>
</dbReference>
<dbReference type="GO" id="GO:0006099">
    <property type="term" value="P:tricarboxylic acid cycle"/>
    <property type="evidence" value="ECO:0007669"/>
    <property type="project" value="UniProtKB-KW"/>
</dbReference>
<dbReference type="CDD" id="cd01586">
    <property type="entry name" value="AcnA_IRP"/>
    <property type="match status" value="1"/>
</dbReference>
<dbReference type="CDD" id="cd01580">
    <property type="entry name" value="AcnA_IRP_Swivel"/>
    <property type="match status" value="1"/>
</dbReference>
<dbReference type="FunFam" id="3.30.499.10:FF:000002">
    <property type="entry name" value="Aconitate hydratase"/>
    <property type="match status" value="1"/>
</dbReference>
<dbReference type="FunFam" id="3.30.499.10:FF:000005">
    <property type="entry name" value="cytoplasmic aconitate hydratase"/>
    <property type="match status" value="1"/>
</dbReference>
<dbReference type="FunFam" id="3.20.19.10:FF:000005">
    <property type="entry name" value="Iron-responsive element-binding protein 2"/>
    <property type="match status" value="1"/>
</dbReference>
<dbReference type="Gene3D" id="6.10.190.10">
    <property type="match status" value="1"/>
</dbReference>
<dbReference type="Gene3D" id="3.30.499.10">
    <property type="entry name" value="Aconitase, domain 3"/>
    <property type="match status" value="2"/>
</dbReference>
<dbReference type="Gene3D" id="3.20.19.10">
    <property type="entry name" value="Aconitase, domain 4"/>
    <property type="match status" value="1"/>
</dbReference>
<dbReference type="InterPro" id="IPR044137">
    <property type="entry name" value="AcnA_IRP_Swivel"/>
</dbReference>
<dbReference type="InterPro" id="IPR015931">
    <property type="entry name" value="Acnase/IPM_dHydase_lsu_aba_1/3"/>
</dbReference>
<dbReference type="InterPro" id="IPR001030">
    <property type="entry name" value="Acoase/IPM_deHydtase_lsu_aba"/>
</dbReference>
<dbReference type="InterPro" id="IPR015928">
    <property type="entry name" value="Aconitase/3IPM_dehydase_swvl"/>
</dbReference>
<dbReference type="InterPro" id="IPR006249">
    <property type="entry name" value="Aconitase/IRP2"/>
</dbReference>
<dbReference type="InterPro" id="IPR018136">
    <property type="entry name" value="Aconitase_4Fe-4S_BS"/>
</dbReference>
<dbReference type="InterPro" id="IPR036008">
    <property type="entry name" value="Aconitase_4Fe-4S_dom"/>
</dbReference>
<dbReference type="InterPro" id="IPR000573">
    <property type="entry name" value="AconitaseA/IPMdHydase_ssu_swvl"/>
</dbReference>
<dbReference type="NCBIfam" id="TIGR01341">
    <property type="entry name" value="aconitase_1"/>
    <property type="match status" value="1"/>
</dbReference>
<dbReference type="NCBIfam" id="NF006757">
    <property type="entry name" value="PRK09277.1"/>
    <property type="match status" value="1"/>
</dbReference>
<dbReference type="NCBIfam" id="NF009520">
    <property type="entry name" value="PRK12881.1"/>
    <property type="match status" value="1"/>
</dbReference>
<dbReference type="PANTHER" id="PTHR11670">
    <property type="entry name" value="ACONITASE/IRON-RESPONSIVE ELEMENT FAMILY MEMBER"/>
    <property type="match status" value="1"/>
</dbReference>
<dbReference type="Pfam" id="PF00330">
    <property type="entry name" value="Aconitase"/>
    <property type="match status" value="1"/>
</dbReference>
<dbReference type="Pfam" id="PF00694">
    <property type="entry name" value="Aconitase_C"/>
    <property type="match status" value="1"/>
</dbReference>
<dbReference type="PRINTS" id="PR00415">
    <property type="entry name" value="ACONITASE"/>
</dbReference>
<dbReference type="SUPFAM" id="SSF53732">
    <property type="entry name" value="Aconitase iron-sulfur domain"/>
    <property type="match status" value="1"/>
</dbReference>
<dbReference type="SUPFAM" id="SSF52016">
    <property type="entry name" value="LeuD/IlvD-like"/>
    <property type="match status" value="1"/>
</dbReference>
<dbReference type="PROSITE" id="PS00450">
    <property type="entry name" value="ACONITASE_1"/>
    <property type="match status" value="1"/>
</dbReference>
<dbReference type="PROSITE" id="PS01244">
    <property type="entry name" value="ACONITASE_2"/>
    <property type="match status" value="1"/>
</dbReference>
<keyword id="KW-0004">4Fe-4S</keyword>
<keyword id="KW-0963">Cytoplasm</keyword>
<keyword id="KW-0408">Iron</keyword>
<keyword id="KW-0411">Iron-sulfur</keyword>
<keyword id="KW-0456">Lyase</keyword>
<keyword id="KW-0479">Metal-binding</keyword>
<keyword id="KW-1185">Reference proteome</keyword>
<keyword id="KW-0694">RNA-binding</keyword>
<keyword id="KW-0816">Tricarboxylic acid cycle</keyword>
<protein>
    <recommendedName>
        <fullName evidence="3">Cytoplasmic aconitate hydratase</fullName>
        <shortName>Aconitase</shortName>
        <ecNumber evidence="2">4.2.1.3</ecNumber>
    </recommendedName>
    <alternativeName>
        <fullName>Citrate hydro-lyase</fullName>
    </alternativeName>
    <alternativeName>
        <fullName>Iron-responsive element-binding protein 1</fullName>
        <shortName>IRE-BP 1</shortName>
    </alternativeName>
</protein>
<comment type="function">
    <text evidence="2">Bifunctional iron sensor that switches between 2 activities depending on iron availability. Iron deprivation, promotes its mRNA binding activity through which it regulates the expression of genes involved in iron uptake, sequestration and utilization. Binds to iron-responsive elements (IRES) in the untranslated region of target mRNAs preventing for instance the translation of ferritin and aminolevulinic acid synthase and stabilizing the transferrin receptor mRNA.</text>
</comment>
<comment type="function">
    <text evidence="2">Conversely, when cellular iron levels are high, binds a 4Fe-4S cluster which precludes RNA binding activity and promotes the aconitase activity, the isomerization of citrate to isocitrate via cis-aconitate.</text>
</comment>
<comment type="catalytic activity">
    <reaction evidence="2">
        <text>citrate = D-threo-isocitrate</text>
        <dbReference type="Rhea" id="RHEA:10336"/>
        <dbReference type="ChEBI" id="CHEBI:15562"/>
        <dbReference type="ChEBI" id="CHEBI:16947"/>
        <dbReference type="EC" id="4.2.1.3"/>
    </reaction>
</comment>
<comment type="cofactor">
    <cofactor evidence="1">
        <name>[4Fe-4S] cluster</name>
        <dbReference type="ChEBI" id="CHEBI:49883"/>
    </cofactor>
    <text evidence="1">Binds 1 [4Fe-4S] cluster per subunit.</text>
</comment>
<comment type="subcellular location">
    <subcellularLocation>
        <location evidence="2">Cytoplasm</location>
        <location evidence="2">Cytosol</location>
    </subcellularLocation>
</comment>
<comment type="similarity">
    <text evidence="3">Belongs to the aconitase/IPM isomerase family.</text>
</comment>
<evidence type="ECO:0000250" key="1"/>
<evidence type="ECO:0000250" key="2">
    <source>
        <dbReference type="UniProtKB" id="P21399"/>
    </source>
</evidence>
<evidence type="ECO:0000305" key="3"/>
<feature type="chain" id="PRO_0000076679" description="Cytoplasmic aconitate hydratase">
    <location>
        <begin position="1"/>
        <end position="889"/>
    </location>
</feature>
<feature type="binding site" evidence="1">
    <location>
        <position position="86"/>
    </location>
    <ligand>
        <name>substrate</name>
    </ligand>
</feature>
<feature type="binding site" evidence="1">
    <location>
        <begin position="205"/>
        <end position="207"/>
    </location>
    <ligand>
        <name>substrate</name>
    </ligand>
</feature>
<feature type="binding site" evidence="1">
    <location>
        <position position="437"/>
    </location>
    <ligand>
        <name>[4Fe-4S] cluster</name>
        <dbReference type="ChEBI" id="CHEBI:49883"/>
    </ligand>
</feature>
<feature type="binding site" evidence="1">
    <location>
        <position position="503"/>
    </location>
    <ligand>
        <name>[4Fe-4S] cluster</name>
        <dbReference type="ChEBI" id="CHEBI:49883"/>
    </ligand>
</feature>
<feature type="binding site" evidence="1">
    <location>
        <position position="506"/>
    </location>
    <ligand>
        <name>[4Fe-4S] cluster</name>
        <dbReference type="ChEBI" id="CHEBI:49883"/>
    </ligand>
</feature>
<feature type="binding site" evidence="1">
    <location>
        <position position="536"/>
    </location>
    <ligand>
        <name>substrate</name>
    </ligand>
</feature>
<feature type="binding site" evidence="1">
    <location>
        <position position="541"/>
    </location>
    <ligand>
        <name>substrate</name>
    </ligand>
</feature>
<feature type="binding site" evidence="1">
    <location>
        <position position="699"/>
    </location>
    <ligand>
        <name>substrate</name>
    </ligand>
</feature>
<feature type="binding site" evidence="1">
    <location>
        <begin position="779"/>
        <end position="780"/>
    </location>
    <ligand>
        <name>substrate</name>
    </ligand>
</feature>